<comment type="function">
    <text evidence="1">May be involved in the transport of sterols.</text>
</comment>
<comment type="tissue specificity">
    <text evidence="2">Expressed at low levels in flowers.</text>
</comment>
<comment type="similarity">
    <text evidence="3">Belongs to the OSBP family.</text>
</comment>
<keyword id="KW-0445">Lipid transport</keyword>
<keyword id="KW-0446">Lipid-binding</keyword>
<keyword id="KW-1185">Reference proteome</keyword>
<keyword id="KW-0813">Transport</keyword>
<protein>
    <recommendedName>
        <fullName>Oxysterol-binding protein-related protein 1B</fullName>
    </recommendedName>
    <alternativeName>
        <fullName>OSBP-related protein 1B</fullName>
    </alternativeName>
</protein>
<organism>
    <name type="scientific">Arabidopsis thaliana</name>
    <name type="common">Mouse-ear cress</name>
    <dbReference type="NCBI Taxonomy" id="3702"/>
    <lineage>
        <taxon>Eukaryota</taxon>
        <taxon>Viridiplantae</taxon>
        <taxon>Streptophyta</taxon>
        <taxon>Embryophyta</taxon>
        <taxon>Tracheophyta</taxon>
        <taxon>Spermatophyta</taxon>
        <taxon>Magnoliopsida</taxon>
        <taxon>eudicotyledons</taxon>
        <taxon>Gunneridae</taxon>
        <taxon>Pentapetalae</taxon>
        <taxon>rosids</taxon>
        <taxon>malvids</taxon>
        <taxon>Brassicales</taxon>
        <taxon>Brassicaceae</taxon>
        <taxon>Camelineae</taxon>
        <taxon>Arabidopsis</taxon>
    </lineage>
</organism>
<dbReference type="EMBL" id="AC004669">
    <property type="protein sequence ID" value="AAM14977.1"/>
    <property type="molecule type" value="Genomic_DNA"/>
</dbReference>
<dbReference type="EMBL" id="CP002685">
    <property type="protein sequence ID" value="AEC08480.1"/>
    <property type="molecule type" value="Genomic_DNA"/>
</dbReference>
<dbReference type="PIR" id="F84715">
    <property type="entry name" value="F84715"/>
</dbReference>
<dbReference type="RefSeq" id="NP_180660.1">
    <property type="nucleotide sequence ID" value="NM_128657.1"/>
</dbReference>
<dbReference type="SMR" id="Q8S8P9"/>
<dbReference type="FunCoup" id="Q8S8P9">
    <property type="interactions" value="1831"/>
</dbReference>
<dbReference type="STRING" id="3702.Q8S8P9"/>
<dbReference type="PaxDb" id="3702-AT2G31030.1"/>
<dbReference type="EnsemblPlants" id="AT2G31030.1">
    <property type="protein sequence ID" value="AT2G31030.1"/>
    <property type="gene ID" value="AT2G31030"/>
</dbReference>
<dbReference type="GeneID" id="817654"/>
<dbReference type="Gramene" id="AT2G31030.1">
    <property type="protein sequence ID" value="AT2G31030.1"/>
    <property type="gene ID" value="AT2G31030"/>
</dbReference>
<dbReference type="KEGG" id="ath:AT2G31030"/>
<dbReference type="Araport" id="AT2G31030"/>
<dbReference type="TAIR" id="AT2G31030">
    <property type="gene designation" value="ORP1B"/>
</dbReference>
<dbReference type="eggNOG" id="KOG1737">
    <property type="taxonomic scope" value="Eukaryota"/>
</dbReference>
<dbReference type="HOGENOM" id="CLU_007105_0_0_1"/>
<dbReference type="InParanoid" id="Q8S8P9"/>
<dbReference type="OMA" id="WEESMHY"/>
<dbReference type="PhylomeDB" id="Q8S8P9"/>
<dbReference type="PRO" id="PR:Q8S8P9"/>
<dbReference type="Proteomes" id="UP000006548">
    <property type="component" value="Chromosome 2"/>
</dbReference>
<dbReference type="ExpressionAtlas" id="Q8S8P9">
    <property type="expression patterns" value="baseline and differential"/>
</dbReference>
<dbReference type="GO" id="GO:0008289">
    <property type="term" value="F:lipid binding"/>
    <property type="evidence" value="ECO:0007669"/>
    <property type="project" value="UniProtKB-KW"/>
</dbReference>
<dbReference type="GO" id="GO:0006869">
    <property type="term" value="P:lipid transport"/>
    <property type="evidence" value="ECO:0007669"/>
    <property type="project" value="UniProtKB-KW"/>
</dbReference>
<dbReference type="FunFam" id="3.30.70.3490:FF:000006">
    <property type="entry name" value="Oxysterol-binding protein-related protein 1C"/>
    <property type="match status" value="1"/>
</dbReference>
<dbReference type="FunFam" id="2.40.160.120:FF:000006">
    <property type="entry name" value="oxysterol-binding protein-related protein 1D isoform X1"/>
    <property type="match status" value="1"/>
</dbReference>
<dbReference type="Gene3D" id="2.40.160.120">
    <property type="match status" value="1"/>
</dbReference>
<dbReference type="Gene3D" id="3.30.70.3490">
    <property type="match status" value="1"/>
</dbReference>
<dbReference type="InterPro" id="IPR037239">
    <property type="entry name" value="OSBP_sf"/>
</dbReference>
<dbReference type="InterPro" id="IPR000648">
    <property type="entry name" value="Oxysterol-bd"/>
</dbReference>
<dbReference type="PANTHER" id="PTHR10972">
    <property type="entry name" value="OXYSTEROL-BINDING PROTEIN-RELATED"/>
    <property type="match status" value="1"/>
</dbReference>
<dbReference type="PANTHER" id="PTHR10972:SF96">
    <property type="entry name" value="OXYSTEROL-BINDING PROTEIN-RELATED PROTEIN 1A-RELATED"/>
    <property type="match status" value="1"/>
</dbReference>
<dbReference type="Pfam" id="PF01237">
    <property type="entry name" value="Oxysterol_BP"/>
    <property type="match status" value="1"/>
</dbReference>
<dbReference type="SUPFAM" id="SSF144000">
    <property type="entry name" value="Oxysterol-binding protein-like"/>
    <property type="match status" value="1"/>
</dbReference>
<reference key="1">
    <citation type="journal article" date="1999" name="Nature">
        <title>Sequence and analysis of chromosome 2 of the plant Arabidopsis thaliana.</title>
        <authorList>
            <person name="Lin X."/>
            <person name="Kaul S."/>
            <person name="Rounsley S.D."/>
            <person name="Shea T.P."/>
            <person name="Benito M.-I."/>
            <person name="Town C.D."/>
            <person name="Fujii C.Y."/>
            <person name="Mason T.M."/>
            <person name="Bowman C.L."/>
            <person name="Barnstead M.E."/>
            <person name="Feldblyum T.V."/>
            <person name="Buell C.R."/>
            <person name="Ketchum K.A."/>
            <person name="Lee J.J."/>
            <person name="Ronning C.M."/>
            <person name="Koo H.L."/>
            <person name="Moffat K.S."/>
            <person name="Cronin L.A."/>
            <person name="Shen M."/>
            <person name="Pai G."/>
            <person name="Van Aken S."/>
            <person name="Umayam L."/>
            <person name="Tallon L.J."/>
            <person name="Gill J.E."/>
            <person name="Adams M.D."/>
            <person name="Carrera A.J."/>
            <person name="Creasy T.H."/>
            <person name="Goodman H.M."/>
            <person name="Somerville C.R."/>
            <person name="Copenhaver G.P."/>
            <person name="Preuss D."/>
            <person name="Nierman W.C."/>
            <person name="White O."/>
            <person name="Eisen J.A."/>
            <person name="Salzberg S.L."/>
            <person name="Fraser C.M."/>
            <person name="Venter J.C."/>
        </authorList>
    </citation>
    <scope>NUCLEOTIDE SEQUENCE [LARGE SCALE GENOMIC DNA]</scope>
    <source>
        <strain>cv. Columbia</strain>
    </source>
</reference>
<reference key="2">
    <citation type="journal article" date="2017" name="Plant J.">
        <title>Araport11: a complete reannotation of the Arabidopsis thaliana reference genome.</title>
        <authorList>
            <person name="Cheng C.Y."/>
            <person name="Krishnakumar V."/>
            <person name="Chan A.P."/>
            <person name="Thibaud-Nissen F."/>
            <person name="Schobel S."/>
            <person name="Town C.D."/>
        </authorList>
    </citation>
    <scope>GENOME REANNOTATION</scope>
    <source>
        <strain>cv. Columbia</strain>
    </source>
</reference>
<reference key="3">
    <citation type="journal article" date="2006" name="Plant Mol. Biol.">
        <title>Identification and characterization of PiORP1, a Petunia oxysterol-binding-protein related protein involved in receptor-kinase mediated signaling in pollen, and analysis of the ORP gene family in Arabidopsis.</title>
        <authorList>
            <person name="Skirpan A.L."/>
            <person name="Dowd P.E."/>
            <person name="Sijacic P."/>
            <person name="Jaworski C.J."/>
            <person name="Gilroy S."/>
            <person name="Kao T.H."/>
        </authorList>
    </citation>
    <scope>TISSUE SPECIFICITY</scope>
    <scope>GENE FAMILY</scope>
    <scope>NOMENCLATURE</scope>
</reference>
<evidence type="ECO:0000250" key="1"/>
<evidence type="ECO:0000269" key="2">
    <source>
    </source>
</evidence>
<evidence type="ECO:0000305" key="3"/>
<accession>Q8S8P9</accession>
<proteinExistence type="evidence at transcript level"/>
<gene>
    <name type="primary">ORP1B</name>
    <name type="ordered locus">At2g31030</name>
    <name type="ORF">F7F1.24</name>
</gene>
<name>ORP1B_ARATH</name>
<feature type="chain" id="PRO_0000402157" description="Oxysterol-binding protein-related protein 1B">
    <location>
        <begin position="1"/>
        <end position="489"/>
    </location>
</feature>
<sequence length="489" mass="56556">MEARVISCTTFGDNKVVKIAVLNHQAITKYKAGENETTVVVSDDTCPEKDVKEIKKFCEKLGYVYEGRLSEEYTQTNTGPDDDWITNGFESDDDVDPSIKTIGFNYPHVNRRNKLPDPVEKEKSVSLWSMIKDNIGKDLTKVCLPVYFNEPLSSLQKCFEDLEYSYLLDQASEWGKRGNNLMRILNVAAFAVSGYASTKGRICKPFNPMLGETYEADYPDKGLRFFSEKVSHHPMIVACHCDGTGWKFWGDSNLKSKFWGRSIQLDPIGLLTLQFDDGEIVQWSKVTTSIYNLILGKLYCDHYGTMLIEGNGEYSCKLKFKKQSMMDRNPHQVQGIVEDKNGKTVAKLFGKWDESMYYVMVNQGKESESHLLWKRNKPLENPTKYNLTRFGITLNELTPDLKEMLPPTDSRLRPDQRYLEKGEFEMGNREKLRLEQRQRQAREKQERGWKPTWFSKEKGSETYRYIGGYWEARDSGRWDDCPDIFGQVH</sequence>